<proteinExistence type="inferred from homology"/>
<keyword id="KW-0046">Antibiotic resistance</keyword>
<keyword id="KW-0067">ATP-binding</keyword>
<keyword id="KW-0997">Cell inner membrane</keyword>
<keyword id="KW-1003">Cell membrane</keyword>
<keyword id="KW-0472">Membrane</keyword>
<keyword id="KW-0547">Nucleotide-binding</keyword>
<keyword id="KW-1185">Reference proteome</keyword>
<keyword id="KW-1278">Translocase</keyword>
<keyword id="KW-0812">Transmembrane</keyword>
<keyword id="KW-1133">Transmembrane helix</keyword>
<keyword id="KW-0813">Transport</keyword>
<name>MACB1_YERPE</name>
<dbReference type="EC" id="7.6.2.-" evidence="1"/>
<dbReference type="EMBL" id="AE009952">
    <property type="protein sequence ID" value="AAM86364.1"/>
    <property type="molecule type" value="Genomic_DNA"/>
</dbReference>
<dbReference type="EMBL" id="AL590842">
    <property type="protein sequence ID" value="CAL20017.1"/>
    <property type="molecule type" value="Genomic_DNA"/>
</dbReference>
<dbReference type="EMBL" id="AE017042">
    <property type="protein sequence ID" value="AAS61472.1"/>
    <property type="molecule type" value="Genomic_DNA"/>
</dbReference>
<dbReference type="PIR" id="AG0166">
    <property type="entry name" value="AG0166"/>
</dbReference>
<dbReference type="RefSeq" id="YP_002346388.1">
    <property type="nucleotide sequence ID" value="NC_003143.1"/>
</dbReference>
<dbReference type="SMR" id="Q7CHI2"/>
<dbReference type="STRING" id="214092.YPO1365"/>
<dbReference type="PaxDb" id="214092-YPO1365"/>
<dbReference type="DNASU" id="1147760"/>
<dbReference type="EnsemblBacteria" id="AAS61472">
    <property type="protein sequence ID" value="AAS61472"/>
    <property type="gene ID" value="YP_1229"/>
</dbReference>
<dbReference type="KEGG" id="ype:YPO1365"/>
<dbReference type="KEGG" id="ypk:y2813"/>
<dbReference type="KEGG" id="ypm:YP_1229"/>
<dbReference type="PATRIC" id="fig|214092.21.peg.1686"/>
<dbReference type="eggNOG" id="COG0577">
    <property type="taxonomic scope" value="Bacteria"/>
</dbReference>
<dbReference type="eggNOG" id="COG1136">
    <property type="taxonomic scope" value="Bacteria"/>
</dbReference>
<dbReference type="HOGENOM" id="CLU_000604_78_3_6"/>
<dbReference type="OMA" id="RINFKVI"/>
<dbReference type="OrthoDB" id="9770036at2"/>
<dbReference type="Proteomes" id="UP000000815">
    <property type="component" value="Chromosome"/>
</dbReference>
<dbReference type="Proteomes" id="UP000001019">
    <property type="component" value="Chromosome"/>
</dbReference>
<dbReference type="Proteomes" id="UP000002490">
    <property type="component" value="Chromosome"/>
</dbReference>
<dbReference type="GO" id="GO:0005886">
    <property type="term" value="C:plasma membrane"/>
    <property type="evidence" value="ECO:0000318"/>
    <property type="project" value="GO_Central"/>
</dbReference>
<dbReference type="GO" id="GO:0005524">
    <property type="term" value="F:ATP binding"/>
    <property type="evidence" value="ECO:0007669"/>
    <property type="project" value="UniProtKB-KW"/>
</dbReference>
<dbReference type="GO" id="GO:0016887">
    <property type="term" value="F:ATP hydrolysis activity"/>
    <property type="evidence" value="ECO:0007669"/>
    <property type="project" value="InterPro"/>
</dbReference>
<dbReference type="GO" id="GO:0022857">
    <property type="term" value="F:transmembrane transporter activity"/>
    <property type="evidence" value="ECO:0000318"/>
    <property type="project" value="GO_Central"/>
</dbReference>
<dbReference type="GO" id="GO:0046677">
    <property type="term" value="P:response to antibiotic"/>
    <property type="evidence" value="ECO:0007669"/>
    <property type="project" value="UniProtKB-KW"/>
</dbReference>
<dbReference type="CDD" id="cd03255">
    <property type="entry name" value="ABC_MJ0796_LolCDE_FtsE"/>
    <property type="match status" value="1"/>
</dbReference>
<dbReference type="FunFam" id="3.40.50.300:FF:000032">
    <property type="entry name" value="Export ABC transporter ATP-binding protein"/>
    <property type="match status" value="1"/>
</dbReference>
<dbReference type="Gene3D" id="3.40.50.300">
    <property type="entry name" value="P-loop containing nucleotide triphosphate hydrolases"/>
    <property type="match status" value="1"/>
</dbReference>
<dbReference type="InterPro" id="IPR003593">
    <property type="entry name" value="AAA+_ATPase"/>
</dbReference>
<dbReference type="InterPro" id="IPR003838">
    <property type="entry name" value="ABC3_permease_C"/>
</dbReference>
<dbReference type="InterPro" id="IPR003439">
    <property type="entry name" value="ABC_transporter-like_ATP-bd"/>
</dbReference>
<dbReference type="InterPro" id="IPR017871">
    <property type="entry name" value="ABC_transporter-like_CS"/>
</dbReference>
<dbReference type="InterPro" id="IPR017911">
    <property type="entry name" value="MacB-like_ATP-bd"/>
</dbReference>
<dbReference type="InterPro" id="IPR025857">
    <property type="entry name" value="MacB_PCD"/>
</dbReference>
<dbReference type="InterPro" id="IPR050250">
    <property type="entry name" value="Macrolide_Exporter_MacB"/>
</dbReference>
<dbReference type="InterPro" id="IPR027417">
    <property type="entry name" value="P-loop_NTPase"/>
</dbReference>
<dbReference type="NCBIfam" id="NF007826">
    <property type="entry name" value="PRK10535.1"/>
    <property type="match status" value="1"/>
</dbReference>
<dbReference type="PANTHER" id="PTHR30572:SF7">
    <property type="entry name" value="MACROLIDE EXPORT ATP-BINDING_PERMEASE PROTEIN MACB"/>
    <property type="match status" value="1"/>
</dbReference>
<dbReference type="PANTHER" id="PTHR30572">
    <property type="entry name" value="MEMBRANE COMPONENT OF TRANSPORTER-RELATED"/>
    <property type="match status" value="1"/>
</dbReference>
<dbReference type="Pfam" id="PF00005">
    <property type="entry name" value="ABC_tran"/>
    <property type="match status" value="1"/>
</dbReference>
<dbReference type="Pfam" id="PF02687">
    <property type="entry name" value="FtsX"/>
    <property type="match status" value="1"/>
</dbReference>
<dbReference type="Pfam" id="PF12704">
    <property type="entry name" value="MacB_PCD"/>
    <property type="match status" value="1"/>
</dbReference>
<dbReference type="SMART" id="SM00382">
    <property type="entry name" value="AAA"/>
    <property type="match status" value="1"/>
</dbReference>
<dbReference type="SUPFAM" id="SSF52540">
    <property type="entry name" value="P-loop containing nucleoside triphosphate hydrolases"/>
    <property type="match status" value="1"/>
</dbReference>
<dbReference type="PROSITE" id="PS00211">
    <property type="entry name" value="ABC_TRANSPORTER_1"/>
    <property type="match status" value="1"/>
</dbReference>
<dbReference type="PROSITE" id="PS50893">
    <property type="entry name" value="ABC_TRANSPORTER_2"/>
    <property type="match status" value="1"/>
</dbReference>
<dbReference type="PROSITE" id="PS51267">
    <property type="entry name" value="MACB"/>
    <property type="match status" value="1"/>
</dbReference>
<evidence type="ECO:0000255" key="1">
    <source>
        <dbReference type="HAMAP-Rule" id="MF_01720"/>
    </source>
</evidence>
<evidence type="ECO:0000305" key="2"/>
<comment type="function">
    <text evidence="1">Part of the tripartite efflux system MacAB-TolC. MacB is a non-canonical ABC transporter that contains transmembrane domains (TMD), which form a pore in the inner membrane, and an ATP-binding domain (NBD), which is responsible for energy generation. Confers resistance against macrolides.</text>
</comment>
<comment type="subunit">
    <text evidence="1">Homodimer. Part of the tripartite efflux system MacAB-TolC, which is composed of an inner membrane transporter, MacB, a periplasmic membrane fusion protein, MacA, and an outer membrane component, TolC. The complex forms a large protein conduit and can translocate molecules across both the inner and outer membranes. Interacts with MacA.</text>
</comment>
<comment type="subcellular location">
    <subcellularLocation>
        <location evidence="1">Cell inner membrane</location>
        <topology evidence="1">Multi-pass membrane protein</topology>
    </subcellularLocation>
</comment>
<comment type="similarity">
    <text evidence="1">Belongs to the ABC transporter superfamily. Macrolide exporter (TC 3.A.1.122) family.</text>
</comment>
<organism>
    <name type="scientific">Yersinia pestis</name>
    <dbReference type="NCBI Taxonomy" id="632"/>
    <lineage>
        <taxon>Bacteria</taxon>
        <taxon>Pseudomonadati</taxon>
        <taxon>Pseudomonadota</taxon>
        <taxon>Gammaproteobacteria</taxon>
        <taxon>Enterobacterales</taxon>
        <taxon>Yersiniaceae</taxon>
        <taxon>Yersinia</taxon>
    </lineage>
</organism>
<sequence>MAALLELEGIRRSYQSGEEIVDVLQDVSLTINAGELVAIIGASGSGKSTLMNILGCLDKPSAGIYRVAGQNVDELDDDALAALRREHFGFIFQRYHLLPHLSAAHNVEVPAVYAGLGKHERRERANMLLTRLGLGDRVSYQPNQLSGGQQQRVSIARALMNGGQVILADEPTGALDSHSSVEVMAILKQLQQQGHTVIIVTHDPTVAAQAERVIEIKDGRIMADSGSKNEPVVAAAELMSLTPAAPSWQQLVGRFREALLMAWRAMSANKMRTALTMLGIIIGIASVVSILVVGDAAKQLVLADIRAIGTNTIDIYPGKDFGDDDPSTRQALVHDDMAALKAQSYVSAVSPSIGGSMRLRFGNIDVAASVLGVSDEYFRVFGMAMEQGAPITREQVERQAQTVVIDLNTQRRLFPHMKDVVGQVILVGNMPATVVGVVAEKKSMFGSNKALRVWVPYSTMANRLMGRSYFDSITIRIKEGYSSKEAEQQLVRLLTLRHGKKDIFTYNMDSLLQTAEKTTQTMQLFLTLVAVISLVVGGIGVMNIMLVSVTERTREIGIRMAVGARSSDVMQQFLIEAVLVCLIGGALGISLSFAIGLIVEMFLPNWRIAFPPMALFSAFLCSTVIGVVFGYLPARSAARLNPIDALARE</sequence>
<feature type="chain" id="PRO_0000269986" description="Macrolide export ATP-binding/permease protein MacB 1">
    <location>
        <begin position="1"/>
        <end position="649"/>
    </location>
</feature>
<feature type="transmembrane region" description="Helical" evidence="1">
    <location>
        <begin position="274"/>
        <end position="294"/>
    </location>
</feature>
<feature type="transmembrane region" description="Helical" evidence="1">
    <location>
        <begin position="420"/>
        <end position="440"/>
    </location>
</feature>
<feature type="transmembrane region" description="Helical" evidence="1">
    <location>
        <begin position="524"/>
        <end position="544"/>
    </location>
</feature>
<feature type="transmembrane region" description="Helical" evidence="1">
    <location>
        <begin position="578"/>
        <end position="598"/>
    </location>
</feature>
<feature type="transmembrane region" description="Helical" evidence="1">
    <location>
        <begin position="608"/>
        <end position="628"/>
    </location>
</feature>
<feature type="domain" description="ABC transporter" evidence="1">
    <location>
        <begin position="5"/>
        <end position="243"/>
    </location>
</feature>
<feature type="binding site" evidence="1">
    <location>
        <begin position="41"/>
        <end position="48"/>
    </location>
    <ligand>
        <name>ATP</name>
        <dbReference type="ChEBI" id="CHEBI:30616"/>
    </ligand>
</feature>
<feature type="sequence conflict" description="In Ref. 3; AAS61472." evidence="2" ref="3">
    <original>Q</original>
    <variation>P</variation>
    <location>
        <position position="401"/>
    </location>
</feature>
<gene>
    <name evidence="1" type="primary">macB1</name>
    <name type="ordered locus">YPO1365</name>
    <name type="ordered locus">y2813</name>
    <name type="ordered locus">YP_1229</name>
</gene>
<accession>Q7CHI2</accession>
<accession>Q74VR4</accession>
<reference key="1">
    <citation type="journal article" date="2002" name="J. Bacteriol.">
        <title>Genome sequence of Yersinia pestis KIM.</title>
        <authorList>
            <person name="Deng W."/>
            <person name="Burland V."/>
            <person name="Plunkett G. III"/>
            <person name="Boutin A."/>
            <person name="Mayhew G.F."/>
            <person name="Liss P."/>
            <person name="Perna N.T."/>
            <person name="Rose D.J."/>
            <person name="Mau B."/>
            <person name="Zhou S."/>
            <person name="Schwartz D.C."/>
            <person name="Fetherston J.D."/>
            <person name="Lindler L.E."/>
            <person name="Brubaker R.R."/>
            <person name="Plano G.V."/>
            <person name="Straley S.C."/>
            <person name="McDonough K.A."/>
            <person name="Nilles M.L."/>
            <person name="Matson J.S."/>
            <person name="Blattner F.R."/>
            <person name="Perry R.D."/>
        </authorList>
    </citation>
    <scope>NUCLEOTIDE SEQUENCE [LARGE SCALE GENOMIC DNA]</scope>
    <source>
        <strain>KIM10+ / Biovar Mediaevalis</strain>
    </source>
</reference>
<reference key="2">
    <citation type="journal article" date="2001" name="Nature">
        <title>Genome sequence of Yersinia pestis, the causative agent of plague.</title>
        <authorList>
            <person name="Parkhill J."/>
            <person name="Wren B.W."/>
            <person name="Thomson N.R."/>
            <person name="Titball R.W."/>
            <person name="Holden M.T.G."/>
            <person name="Prentice M.B."/>
            <person name="Sebaihia M."/>
            <person name="James K.D."/>
            <person name="Churcher C.M."/>
            <person name="Mungall K.L."/>
            <person name="Baker S."/>
            <person name="Basham D."/>
            <person name="Bentley S.D."/>
            <person name="Brooks K."/>
            <person name="Cerdeno-Tarraga A.-M."/>
            <person name="Chillingworth T."/>
            <person name="Cronin A."/>
            <person name="Davies R.M."/>
            <person name="Davis P."/>
            <person name="Dougan G."/>
            <person name="Feltwell T."/>
            <person name="Hamlin N."/>
            <person name="Holroyd S."/>
            <person name="Jagels K."/>
            <person name="Karlyshev A.V."/>
            <person name="Leather S."/>
            <person name="Moule S."/>
            <person name="Oyston P.C.F."/>
            <person name="Quail M.A."/>
            <person name="Rutherford K.M."/>
            <person name="Simmonds M."/>
            <person name="Skelton J."/>
            <person name="Stevens K."/>
            <person name="Whitehead S."/>
            <person name="Barrell B.G."/>
        </authorList>
    </citation>
    <scope>NUCLEOTIDE SEQUENCE [LARGE SCALE GENOMIC DNA]</scope>
    <source>
        <strain>CO-92 / Biovar Orientalis</strain>
    </source>
</reference>
<reference key="3">
    <citation type="journal article" date="2004" name="DNA Res.">
        <title>Complete genome sequence of Yersinia pestis strain 91001, an isolate avirulent to humans.</title>
        <authorList>
            <person name="Song Y."/>
            <person name="Tong Z."/>
            <person name="Wang J."/>
            <person name="Wang L."/>
            <person name="Guo Z."/>
            <person name="Han Y."/>
            <person name="Zhang J."/>
            <person name="Pei D."/>
            <person name="Zhou D."/>
            <person name="Qin H."/>
            <person name="Pang X."/>
            <person name="Han Y."/>
            <person name="Zhai J."/>
            <person name="Li M."/>
            <person name="Cui B."/>
            <person name="Qi Z."/>
            <person name="Jin L."/>
            <person name="Dai R."/>
            <person name="Chen F."/>
            <person name="Li S."/>
            <person name="Ye C."/>
            <person name="Du Z."/>
            <person name="Lin W."/>
            <person name="Wang J."/>
            <person name="Yu J."/>
            <person name="Yang H."/>
            <person name="Wang J."/>
            <person name="Huang P."/>
            <person name="Yang R."/>
        </authorList>
    </citation>
    <scope>NUCLEOTIDE SEQUENCE [LARGE SCALE GENOMIC DNA]</scope>
    <source>
        <strain>91001 / Biovar Mediaevalis</strain>
    </source>
</reference>
<protein>
    <recommendedName>
        <fullName evidence="1">Macrolide export ATP-binding/permease protein MacB 1</fullName>
        <ecNumber evidence="1">7.6.2.-</ecNumber>
    </recommendedName>
</protein>